<gene>
    <name evidence="1" type="primary">ureC</name>
    <name type="ordered locus">cu1773</name>
</gene>
<sequence>MAYEISRQQYGELYGPTTGDGIRLADTDLVLRIEKDLTAKGDEVGFGGGKVIREGMGMNARMTRDEGVVDTVITNAIIVDHTGIYKADIGIRDGLIEGIGRAGNPDVQDDIDIPVGVNTEAYAGEHTIVTAGAIDTHIHFISPDQFDTALSNGTTTFIGGGTGPADGTKATTITPGEWHIHRMIEATSDAPVNIGLLGKGHAAVPGPLKAQIRAGAIGLKIHEDWGATRSAIDTSLRVADELDVQIAIHTDTLNEYGYLEDTIKAIDHRTIHTFHTEGAGGGHAPDIIAIAGEKNVIPASTNPTLPFTKNTVDEHLDMLMVCHHLNKDIPEDVAFADSRIRGETIGVEDVLHDLGVFSITSSDSQAMGRVGEVVLRTWQVAHINKQQRGPLEGDSEGNDNNRIKRYVSKYTINPAIAHGISHLVGSVEVGKMADLVLWEPRFFGIKPKVVLKSGQAAYSEMGDSNGSIPTPQPVTYRRNWGATGAASETAAVTFVPSVALQSGVEDKLRGGRALLEARDMREITKKDLKHNAATPKIEVDPQTYQVRLDGELVEGSKPTETLPMGQKYFLF</sequence>
<organism>
    <name type="scientific">Corynebacterium urealyticum (strain ATCC 43042 / DSM 7109)</name>
    <dbReference type="NCBI Taxonomy" id="504474"/>
    <lineage>
        <taxon>Bacteria</taxon>
        <taxon>Bacillati</taxon>
        <taxon>Actinomycetota</taxon>
        <taxon>Actinomycetes</taxon>
        <taxon>Mycobacteriales</taxon>
        <taxon>Corynebacteriaceae</taxon>
        <taxon>Corynebacterium</taxon>
    </lineage>
</organism>
<reference key="1">
    <citation type="journal article" date="2008" name="J. Biotechnol.">
        <title>The lifestyle of Corynebacterium urealyticum derived from its complete genome sequence established by pyrosequencing.</title>
        <authorList>
            <person name="Tauch A."/>
            <person name="Trost E."/>
            <person name="Tilker A."/>
            <person name="Ludewig U."/>
            <person name="Schneiker S."/>
            <person name="Goesmann A."/>
            <person name="Arnold W."/>
            <person name="Bekel T."/>
            <person name="Brinkrolf K."/>
            <person name="Brune I."/>
            <person name="Goetker S."/>
            <person name="Kalinowski J."/>
            <person name="Kamp P.-B."/>
            <person name="Lobo F.P."/>
            <person name="Viehoever P."/>
            <person name="Weisshaar B."/>
            <person name="Soriano F."/>
            <person name="Droege M."/>
            <person name="Puehler A."/>
        </authorList>
    </citation>
    <scope>NUCLEOTIDE SEQUENCE [LARGE SCALE GENOMIC DNA]</scope>
    <source>
        <strain>ATCC 43042 / DSM 7109</strain>
    </source>
</reference>
<keyword id="KW-0963">Cytoplasm</keyword>
<keyword id="KW-0378">Hydrolase</keyword>
<keyword id="KW-0479">Metal-binding</keyword>
<keyword id="KW-0533">Nickel</keyword>
<keyword id="KW-1185">Reference proteome</keyword>
<accession>B1VHT2</accession>
<dbReference type="EC" id="3.5.1.5" evidence="1"/>
<dbReference type="EMBL" id="AM942444">
    <property type="protein sequence ID" value="CAQ05732.1"/>
    <property type="molecule type" value="Genomic_DNA"/>
</dbReference>
<dbReference type="RefSeq" id="WP_012361008.1">
    <property type="nucleotide sequence ID" value="NC_010545.1"/>
</dbReference>
<dbReference type="SMR" id="B1VHT2"/>
<dbReference type="STRING" id="504474.cu1773"/>
<dbReference type="GeneID" id="60604556"/>
<dbReference type="KEGG" id="cur:cu1773"/>
<dbReference type="eggNOG" id="COG0804">
    <property type="taxonomic scope" value="Bacteria"/>
</dbReference>
<dbReference type="HOGENOM" id="CLU_000980_0_0_11"/>
<dbReference type="UniPathway" id="UPA00258">
    <property type="reaction ID" value="UER00370"/>
</dbReference>
<dbReference type="Proteomes" id="UP000001727">
    <property type="component" value="Chromosome"/>
</dbReference>
<dbReference type="GO" id="GO:0005737">
    <property type="term" value="C:cytoplasm"/>
    <property type="evidence" value="ECO:0007669"/>
    <property type="project" value="UniProtKB-SubCell"/>
</dbReference>
<dbReference type="GO" id="GO:0016151">
    <property type="term" value="F:nickel cation binding"/>
    <property type="evidence" value="ECO:0007669"/>
    <property type="project" value="UniProtKB-UniRule"/>
</dbReference>
<dbReference type="GO" id="GO:0009039">
    <property type="term" value="F:urease activity"/>
    <property type="evidence" value="ECO:0007669"/>
    <property type="project" value="UniProtKB-UniRule"/>
</dbReference>
<dbReference type="GO" id="GO:0043419">
    <property type="term" value="P:urea catabolic process"/>
    <property type="evidence" value="ECO:0007669"/>
    <property type="project" value="UniProtKB-UniRule"/>
</dbReference>
<dbReference type="CDD" id="cd00375">
    <property type="entry name" value="Urease_alpha"/>
    <property type="match status" value="1"/>
</dbReference>
<dbReference type="Gene3D" id="3.20.20.140">
    <property type="entry name" value="Metal-dependent hydrolases"/>
    <property type="match status" value="1"/>
</dbReference>
<dbReference type="Gene3D" id="2.30.40.10">
    <property type="entry name" value="Urease, subunit C, domain 1"/>
    <property type="match status" value="1"/>
</dbReference>
<dbReference type="HAMAP" id="MF_01953">
    <property type="entry name" value="Urease_alpha"/>
    <property type="match status" value="1"/>
</dbReference>
<dbReference type="InterPro" id="IPR006680">
    <property type="entry name" value="Amidohydro-rel"/>
</dbReference>
<dbReference type="InterPro" id="IPR011059">
    <property type="entry name" value="Metal-dep_hydrolase_composite"/>
</dbReference>
<dbReference type="InterPro" id="IPR032466">
    <property type="entry name" value="Metal_Hydrolase"/>
</dbReference>
<dbReference type="InterPro" id="IPR011612">
    <property type="entry name" value="Urease_alpha_N_dom"/>
</dbReference>
<dbReference type="InterPro" id="IPR050112">
    <property type="entry name" value="Urease_alpha_subunit"/>
</dbReference>
<dbReference type="InterPro" id="IPR017950">
    <property type="entry name" value="Urease_AS"/>
</dbReference>
<dbReference type="InterPro" id="IPR005848">
    <property type="entry name" value="Urease_asu"/>
</dbReference>
<dbReference type="InterPro" id="IPR017951">
    <property type="entry name" value="Urease_asu_c"/>
</dbReference>
<dbReference type="InterPro" id="IPR029754">
    <property type="entry name" value="Urease_Ni-bd"/>
</dbReference>
<dbReference type="NCBIfam" id="NF009686">
    <property type="entry name" value="PRK13207.1"/>
    <property type="match status" value="1"/>
</dbReference>
<dbReference type="NCBIfam" id="TIGR01792">
    <property type="entry name" value="urease_alph"/>
    <property type="match status" value="1"/>
</dbReference>
<dbReference type="PANTHER" id="PTHR43440">
    <property type="entry name" value="UREASE"/>
    <property type="match status" value="1"/>
</dbReference>
<dbReference type="PANTHER" id="PTHR43440:SF1">
    <property type="entry name" value="UREASE"/>
    <property type="match status" value="1"/>
</dbReference>
<dbReference type="Pfam" id="PF01979">
    <property type="entry name" value="Amidohydro_1"/>
    <property type="match status" value="1"/>
</dbReference>
<dbReference type="Pfam" id="PF00449">
    <property type="entry name" value="Urease_alpha"/>
    <property type="match status" value="1"/>
</dbReference>
<dbReference type="PRINTS" id="PR01752">
    <property type="entry name" value="UREASE"/>
</dbReference>
<dbReference type="SUPFAM" id="SSF51338">
    <property type="entry name" value="Composite domain of metallo-dependent hydrolases"/>
    <property type="match status" value="1"/>
</dbReference>
<dbReference type="SUPFAM" id="SSF51556">
    <property type="entry name" value="Metallo-dependent hydrolases"/>
    <property type="match status" value="1"/>
</dbReference>
<dbReference type="PROSITE" id="PS01120">
    <property type="entry name" value="UREASE_1"/>
    <property type="match status" value="1"/>
</dbReference>
<dbReference type="PROSITE" id="PS00145">
    <property type="entry name" value="UREASE_2"/>
    <property type="match status" value="1"/>
</dbReference>
<dbReference type="PROSITE" id="PS51368">
    <property type="entry name" value="UREASE_3"/>
    <property type="match status" value="1"/>
</dbReference>
<feature type="chain" id="PRO_1000188868" description="Urease subunit alpha">
    <location>
        <begin position="1"/>
        <end position="571"/>
    </location>
</feature>
<feature type="domain" description="Urease" evidence="1">
    <location>
        <begin position="132"/>
        <end position="571"/>
    </location>
</feature>
<feature type="active site" description="Proton donor" evidence="1">
    <location>
        <position position="323"/>
    </location>
</feature>
<feature type="binding site" evidence="1">
    <location>
        <position position="137"/>
    </location>
    <ligand>
        <name>Ni(2+)</name>
        <dbReference type="ChEBI" id="CHEBI:49786"/>
        <label>1</label>
    </ligand>
</feature>
<feature type="binding site" evidence="1">
    <location>
        <position position="139"/>
    </location>
    <ligand>
        <name>Ni(2+)</name>
        <dbReference type="ChEBI" id="CHEBI:49786"/>
        <label>1</label>
    </ligand>
</feature>
<feature type="binding site" description="via carbamate group" evidence="1">
    <location>
        <position position="220"/>
    </location>
    <ligand>
        <name>Ni(2+)</name>
        <dbReference type="ChEBI" id="CHEBI:49786"/>
        <label>1</label>
    </ligand>
</feature>
<feature type="binding site" description="via carbamate group" evidence="1">
    <location>
        <position position="220"/>
    </location>
    <ligand>
        <name>Ni(2+)</name>
        <dbReference type="ChEBI" id="CHEBI:49786"/>
        <label>2</label>
    </ligand>
</feature>
<feature type="binding site" evidence="1">
    <location>
        <position position="222"/>
    </location>
    <ligand>
        <name>substrate</name>
    </ligand>
</feature>
<feature type="binding site" evidence="1">
    <location>
        <position position="249"/>
    </location>
    <ligand>
        <name>Ni(2+)</name>
        <dbReference type="ChEBI" id="CHEBI:49786"/>
        <label>2</label>
    </ligand>
</feature>
<feature type="binding site" evidence="1">
    <location>
        <position position="275"/>
    </location>
    <ligand>
        <name>Ni(2+)</name>
        <dbReference type="ChEBI" id="CHEBI:49786"/>
        <label>2</label>
    </ligand>
</feature>
<feature type="binding site" evidence="1">
    <location>
        <position position="363"/>
    </location>
    <ligand>
        <name>Ni(2+)</name>
        <dbReference type="ChEBI" id="CHEBI:49786"/>
        <label>1</label>
    </ligand>
</feature>
<feature type="modified residue" description="N6-carboxylysine" evidence="1">
    <location>
        <position position="220"/>
    </location>
</feature>
<evidence type="ECO:0000255" key="1">
    <source>
        <dbReference type="HAMAP-Rule" id="MF_01953"/>
    </source>
</evidence>
<protein>
    <recommendedName>
        <fullName evidence="1">Urease subunit alpha</fullName>
        <ecNumber evidence="1">3.5.1.5</ecNumber>
    </recommendedName>
    <alternativeName>
        <fullName evidence="1">Urea amidohydrolase subunit alpha</fullName>
    </alternativeName>
</protein>
<name>URE1_CORU7</name>
<comment type="catalytic activity">
    <reaction evidence="1">
        <text>urea + 2 H2O + H(+) = hydrogencarbonate + 2 NH4(+)</text>
        <dbReference type="Rhea" id="RHEA:20557"/>
        <dbReference type="ChEBI" id="CHEBI:15377"/>
        <dbReference type="ChEBI" id="CHEBI:15378"/>
        <dbReference type="ChEBI" id="CHEBI:16199"/>
        <dbReference type="ChEBI" id="CHEBI:17544"/>
        <dbReference type="ChEBI" id="CHEBI:28938"/>
        <dbReference type="EC" id="3.5.1.5"/>
    </reaction>
</comment>
<comment type="cofactor">
    <cofactor evidence="1">
        <name>Ni cation</name>
        <dbReference type="ChEBI" id="CHEBI:25516"/>
    </cofactor>
    <text evidence="1">Binds 2 nickel ions per subunit.</text>
</comment>
<comment type="pathway">
    <text evidence="1">Nitrogen metabolism; urea degradation; CO(2) and NH(3) from urea (urease route): step 1/1.</text>
</comment>
<comment type="subunit">
    <text evidence="1">Heterotrimer of UreA (gamma), UreB (beta) and UreC (alpha) subunits. Three heterotrimers associate to form the active enzyme.</text>
</comment>
<comment type="subcellular location">
    <subcellularLocation>
        <location evidence="1">Cytoplasm</location>
    </subcellularLocation>
</comment>
<comment type="PTM">
    <text evidence="1">Carboxylation allows a single lysine to coordinate two nickel ions.</text>
</comment>
<comment type="similarity">
    <text evidence="1">Belongs to the metallo-dependent hydrolases superfamily. Urease alpha subunit family.</text>
</comment>
<proteinExistence type="inferred from homology"/>